<reference key="1">
    <citation type="journal article" date="2016" name="Front. Microbiol.">
        <title>The complete genome sequence of hyperthermophile Dictyoglomus turgidum DSM 6724 reveals a specialized carbohydrate fermentor.</title>
        <authorList>
            <person name="Brumm P.J."/>
            <person name="Gowda K."/>
            <person name="Robb F.T."/>
            <person name="Mead D.A."/>
        </authorList>
    </citation>
    <scope>NUCLEOTIDE SEQUENCE [LARGE SCALE GENOMIC DNA]</scope>
    <source>
        <strain>DSM 6724 / Z-1310</strain>
    </source>
</reference>
<proteinExistence type="inferred from homology"/>
<accession>B8E089</accession>
<protein>
    <recommendedName>
        <fullName>Transcriptional regulator MraZ</fullName>
    </recommendedName>
</protein>
<sequence>MFVGEYYHSLDEKGRLIVPNNFRQLLGETFYLTRGFERCLNIYTITDWNNFSEIISSFSPTDDLMRRLCRFWFSGSVQVTTDKLGRILIPSFLIDYAELYKDVVIIGAGRHIEIWAKERWEEFNKEENILESMKEINEKVSELWKR</sequence>
<organism>
    <name type="scientific">Dictyoglomus turgidum (strain DSM 6724 / Z-1310)</name>
    <dbReference type="NCBI Taxonomy" id="515635"/>
    <lineage>
        <taxon>Bacteria</taxon>
        <taxon>Pseudomonadati</taxon>
        <taxon>Dictyoglomota</taxon>
        <taxon>Dictyoglomia</taxon>
        <taxon>Dictyoglomales</taxon>
        <taxon>Dictyoglomaceae</taxon>
        <taxon>Dictyoglomus</taxon>
    </lineage>
</organism>
<evidence type="ECO:0000255" key="1">
    <source>
        <dbReference type="HAMAP-Rule" id="MF_01008"/>
    </source>
</evidence>
<evidence type="ECO:0000255" key="2">
    <source>
        <dbReference type="PROSITE-ProRule" id="PRU01076"/>
    </source>
</evidence>
<gene>
    <name evidence="1" type="primary">mraZ</name>
    <name type="ordered locus">Dtur_1256</name>
</gene>
<name>MRAZ_DICTD</name>
<keyword id="KW-0963">Cytoplasm</keyword>
<keyword id="KW-0238">DNA-binding</keyword>
<keyword id="KW-1185">Reference proteome</keyword>
<keyword id="KW-0677">Repeat</keyword>
<keyword id="KW-0804">Transcription</keyword>
<keyword id="KW-0805">Transcription regulation</keyword>
<feature type="chain" id="PRO_1000134788" description="Transcriptional regulator MraZ">
    <location>
        <begin position="1"/>
        <end position="146"/>
    </location>
</feature>
<feature type="domain" description="SpoVT-AbrB 1" evidence="2">
    <location>
        <begin position="5"/>
        <end position="47"/>
    </location>
</feature>
<feature type="domain" description="SpoVT-AbrB 2" evidence="2">
    <location>
        <begin position="76"/>
        <end position="119"/>
    </location>
</feature>
<comment type="subunit">
    <text evidence="1">Forms oligomers.</text>
</comment>
<comment type="subcellular location">
    <subcellularLocation>
        <location evidence="1">Cytoplasm</location>
        <location evidence="1">Nucleoid</location>
    </subcellularLocation>
</comment>
<comment type="similarity">
    <text evidence="1">Belongs to the MraZ family.</text>
</comment>
<dbReference type="EMBL" id="CP001251">
    <property type="protein sequence ID" value="ACK42534.1"/>
    <property type="molecule type" value="Genomic_DNA"/>
</dbReference>
<dbReference type="RefSeq" id="WP_012583616.1">
    <property type="nucleotide sequence ID" value="NC_011661.1"/>
</dbReference>
<dbReference type="RefSeq" id="YP_002353148.1">
    <property type="nucleotide sequence ID" value="NC_011661.1"/>
</dbReference>
<dbReference type="SMR" id="B8E089"/>
<dbReference type="FunCoup" id="B8E089">
    <property type="interactions" value="211"/>
</dbReference>
<dbReference type="STRING" id="515635.Dtur_1256"/>
<dbReference type="EnsemblBacteria" id="ACK42534">
    <property type="protein sequence ID" value="ACK42534"/>
    <property type="gene ID" value="Dtur_1256"/>
</dbReference>
<dbReference type="KEGG" id="dtu:Dtur_1256"/>
<dbReference type="PATRIC" id="fig|515635.4.peg.1296"/>
<dbReference type="eggNOG" id="COG2001">
    <property type="taxonomic scope" value="Bacteria"/>
</dbReference>
<dbReference type="HOGENOM" id="CLU_107907_0_5_0"/>
<dbReference type="InParanoid" id="B8E089"/>
<dbReference type="OrthoDB" id="9807753at2"/>
<dbReference type="Proteomes" id="UP000007719">
    <property type="component" value="Chromosome"/>
</dbReference>
<dbReference type="GO" id="GO:0005737">
    <property type="term" value="C:cytoplasm"/>
    <property type="evidence" value="ECO:0007669"/>
    <property type="project" value="UniProtKB-UniRule"/>
</dbReference>
<dbReference type="GO" id="GO:0009295">
    <property type="term" value="C:nucleoid"/>
    <property type="evidence" value="ECO:0007669"/>
    <property type="project" value="UniProtKB-SubCell"/>
</dbReference>
<dbReference type="GO" id="GO:0003700">
    <property type="term" value="F:DNA-binding transcription factor activity"/>
    <property type="evidence" value="ECO:0000318"/>
    <property type="project" value="GO_Central"/>
</dbReference>
<dbReference type="GO" id="GO:0000976">
    <property type="term" value="F:transcription cis-regulatory region binding"/>
    <property type="evidence" value="ECO:0000318"/>
    <property type="project" value="GO_Central"/>
</dbReference>
<dbReference type="GO" id="GO:2000143">
    <property type="term" value="P:negative regulation of DNA-templated transcription initiation"/>
    <property type="evidence" value="ECO:0000318"/>
    <property type="project" value="GO_Central"/>
</dbReference>
<dbReference type="CDD" id="cd16321">
    <property type="entry name" value="MraZ_C"/>
    <property type="match status" value="1"/>
</dbReference>
<dbReference type="CDD" id="cd16320">
    <property type="entry name" value="MraZ_N"/>
    <property type="match status" value="1"/>
</dbReference>
<dbReference type="FunFam" id="3.40.1550.20:FF:000002">
    <property type="entry name" value="Transcriptional regulator MraZ"/>
    <property type="match status" value="1"/>
</dbReference>
<dbReference type="Gene3D" id="3.40.1550.20">
    <property type="entry name" value="Transcriptional regulator MraZ domain"/>
    <property type="match status" value="1"/>
</dbReference>
<dbReference type="HAMAP" id="MF_01008">
    <property type="entry name" value="MraZ"/>
    <property type="match status" value="1"/>
</dbReference>
<dbReference type="InterPro" id="IPR003444">
    <property type="entry name" value="MraZ"/>
</dbReference>
<dbReference type="InterPro" id="IPR035644">
    <property type="entry name" value="MraZ_C"/>
</dbReference>
<dbReference type="InterPro" id="IPR020603">
    <property type="entry name" value="MraZ_dom"/>
</dbReference>
<dbReference type="InterPro" id="IPR035642">
    <property type="entry name" value="MraZ_N"/>
</dbReference>
<dbReference type="InterPro" id="IPR038619">
    <property type="entry name" value="MraZ_sf"/>
</dbReference>
<dbReference type="InterPro" id="IPR007159">
    <property type="entry name" value="SpoVT-AbrB_dom"/>
</dbReference>
<dbReference type="InterPro" id="IPR037914">
    <property type="entry name" value="SpoVT-AbrB_sf"/>
</dbReference>
<dbReference type="NCBIfam" id="TIGR00242">
    <property type="entry name" value="division/cell wall cluster transcriptional repressor MraZ"/>
    <property type="match status" value="1"/>
</dbReference>
<dbReference type="PANTHER" id="PTHR34701">
    <property type="entry name" value="TRANSCRIPTIONAL REGULATOR MRAZ"/>
    <property type="match status" value="1"/>
</dbReference>
<dbReference type="PANTHER" id="PTHR34701:SF1">
    <property type="entry name" value="TRANSCRIPTIONAL REGULATOR MRAZ"/>
    <property type="match status" value="1"/>
</dbReference>
<dbReference type="Pfam" id="PF02381">
    <property type="entry name" value="MraZ"/>
    <property type="match status" value="2"/>
</dbReference>
<dbReference type="SUPFAM" id="SSF89447">
    <property type="entry name" value="AbrB/MazE/MraZ-like"/>
    <property type="match status" value="1"/>
</dbReference>
<dbReference type="PROSITE" id="PS51740">
    <property type="entry name" value="SPOVT_ABRB"/>
    <property type="match status" value="2"/>
</dbReference>